<gene>
    <name type="primary">dnaK</name>
    <name type="ordered locus">Cj0759</name>
</gene>
<evidence type="ECO:0000250" key="1"/>
<evidence type="ECO:0000256" key="2">
    <source>
        <dbReference type="SAM" id="MobiDB-lite"/>
    </source>
</evidence>
<evidence type="ECO:0000305" key="3"/>
<name>DNAK_CAMJE</name>
<protein>
    <recommendedName>
        <fullName>Chaperone protein DnaK</fullName>
    </recommendedName>
    <alternativeName>
        <fullName>HSP70</fullName>
    </alternativeName>
    <alternativeName>
        <fullName>Heat shock 70 kDa protein</fullName>
    </alternativeName>
    <alternativeName>
        <fullName>Heat shock protein 70</fullName>
    </alternativeName>
</protein>
<accession>O69298</accession>
<accession>Q0PAD1</accession>
<dbReference type="EMBL" id="Y17165">
    <property type="protein sequence ID" value="CAA76670.1"/>
    <property type="molecule type" value="Genomic_DNA"/>
</dbReference>
<dbReference type="EMBL" id="AL111168">
    <property type="protein sequence ID" value="CAL34887.1"/>
    <property type="molecule type" value="Genomic_DNA"/>
</dbReference>
<dbReference type="PIR" id="G81346">
    <property type="entry name" value="G81346"/>
</dbReference>
<dbReference type="RefSeq" id="WP_002826316.1">
    <property type="nucleotide sequence ID" value="NZ_SZUC01000001.1"/>
</dbReference>
<dbReference type="RefSeq" id="YP_002344166.1">
    <property type="nucleotide sequence ID" value="NC_002163.1"/>
</dbReference>
<dbReference type="SMR" id="O69298"/>
<dbReference type="STRING" id="192222.Cj0759"/>
<dbReference type="PaxDb" id="192222-Cj0759"/>
<dbReference type="EnsemblBacteria" id="CAL34887">
    <property type="protein sequence ID" value="CAL34887"/>
    <property type="gene ID" value="Cj0759"/>
</dbReference>
<dbReference type="GeneID" id="905069"/>
<dbReference type="KEGG" id="cje:Cj0759"/>
<dbReference type="PATRIC" id="fig|192222.6.peg.747"/>
<dbReference type="eggNOG" id="COG0443">
    <property type="taxonomic scope" value="Bacteria"/>
</dbReference>
<dbReference type="HOGENOM" id="CLU_005965_2_1_7"/>
<dbReference type="OrthoDB" id="9766019at2"/>
<dbReference type="Proteomes" id="UP000000799">
    <property type="component" value="Chromosome"/>
</dbReference>
<dbReference type="GO" id="GO:0005524">
    <property type="term" value="F:ATP binding"/>
    <property type="evidence" value="ECO:0007669"/>
    <property type="project" value="UniProtKB-UniRule"/>
</dbReference>
<dbReference type="GO" id="GO:0140662">
    <property type="term" value="F:ATP-dependent protein folding chaperone"/>
    <property type="evidence" value="ECO:0007669"/>
    <property type="project" value="InterPro"/>
</dbReference>
<dbReference type="GO" id="GO:0051082">
    <property type="term" value="F:unfolded protein binding"/>
    <property type="evidence" value="ECO:0007669"/>
    <property type="project" value="InterPro"/>
</dbReference>
<dbReference type="CDD" id="cd10234">
    <property type="entry name" value="ASKHA_NBD_HSP70_DnaK-like"/>
    <property type="match status" value="1"/>
</dbReference>
<dbReference type="FunFam" id="2.60.34.10:FF:000014">
    <property type="entry name" value="Chaperone protein DnaK HSP70"/>
    <property type="match status" value="1"/>
</dbReference>
<dbReference type="FunFam" id="1.20.1270.10:FF:000001">
    <property type="entry name" value="Molecular chaperone DnaK"/>
    <property type="match status" value="1"/>
</dbReference>
<dbReference type="FunFam" id="3.30.420.40:FF:000004">
    <property type="entry name" value="Molecular chaperone DnaK"/>
    <property type="match status" value="1"/>
</dbReference>
<dbReference type="FunFam" id="3.90.640.10:FF:000003">
    <property type="entry name" value="Molecular chaperone DnaK"/>
    <property type="match status" value="1"/>
</dbReference>
<dbReference type="Gene3D" id="1.20.1270.10">
    <property type="match status" value="1"/>
</dbReference>
<dbReference type="Gene3D" id="3.30.420.40">
    <property type="match status" value="2"/>
</dbReference>
<dbReference type="Gene3D" id="3.90.640.10">
    <property type="entry name" value="Actin, Chain A, domain 4"/>
    <property type="match status" value="1"/>
</dbReference>
<dbReference type="Gene3D" id="2.60.34.10">
    <property type="entry name" value="Substrate Binding Domain Of DNAk, Chain A, domain 1"/>
    <property type="match status" value="1"/>
</dbReference>
<dbReference type="HAMAP" id="MF_00332">
    <property type="entry name" value="DnaK"/>
    <property type="match status" value="1"/>
</dbReference>
<dbReference type="InterPro" id="IPR043129">
    <property type="entry name" value="ATPase_NBD"/>
</dbReference>
<dbReference type="InterPro" id="IPR012725">
    <property type="entry name" value="Chaperone_DnaK"/>
</dbReference>
<dbReference type="InterPro" id="IPR018181">
    <property type="entry name" value="Heat_shock_70_CS"/>
</dbReference>
<dbReference type="InterPro" id="IPR029048">
    <property type="entry name" value="HSP70_C_sf"/>
</dbReference>
<dbReference type="InterPro" id="IPR029047">
    <property type="entry name" value="HSP70_peptide-bd_sf"/>
</dbReference>
<dbReference type="InterPro" id="IPR013126">
    <property type="entry name" value="Hsp_70_fam"/>
</dbReference>
<dbReference type="NCBIfam" id="NF001413">
    <property type="entry name" value="PRK00290.1"/>
    <property type="match status" value="1"/>
</dbReference>
<dbReference type="NCBIfam" id="NF003520">
    <property type="entry name" value="PRK05183.1"/>
    <property type="match status" value="1"/>
</dbReference>
<dbReference type="NCBIfam" id="TIGR02350">
    <property type="entry name" value="prok_dnaK"/>
    <property type="match status" value="1"/>
</dbReference>
<dbReference type="PANTHER" id="PTHR19375">
    <property type="entry name" value="HEAT SHOCK PROTEIN 70KDA"/>
    <property type="match status" value="1"/>
</dbReference>
<dbReference type="Pfam" id="PF00012">
    <property type="entry name" value="HSP70"/>
    <property type="match status" value="1"/>
</dbReference>
<dbReference type="PRINTS" id="PR00301">
    <property type="entry name" value="HEATSHOCK70"/>
</dbReference>
<dbReference type="SUPFAM" id="SSF53067">
    <property type="entry name" value="Actin-like ATPase domain"/>
    <property type="match status" value="2"/>
</dbReference>
<dbReference type="SUPFAM" id="SSF100934">
    <property type="entry name" value="Heat shock protein 70kD (HSP70), C-terminal subdomain"/>
    <property type="match status" value="1"/>
</dbReference>
<dbReference type="SUPFAM" id="SSF100920">
    <property type="entry name" value="Heat shock protein 70kD (HSP70), peptide-binding domain"/>
    <property type="match status" value="1"/>
</dbReference>
<dbReference type="PROSITE" id="PS00297">
    <property type="entry name" value="HSP70_1"/>
    <property type="match status" value="1"/>
</dbReference>
<dbReference type="PROSITE" id="PS00329">
    <property type="entry name" value="HSP70_2"/>
    <property type="match status" value="1"/>
</dbReference>
<dbReference type="PROSITE" id="PS01036">
    <property type="entry name" value="HSP70_3"/>
    <property type="match status" value="1"/>
</dbReference>
<proteinExistence type="inferred from homology"/>
<sequence>MSKVIGIDLGTTNSCVAVYERGESKVIPNKEGKNTTPSVVAFTDKGEVLVGDSAKRQAVTNPEKTIYSIKRIMGLMINEDAAKEAKNRLPYHITERNGACAIEIAGKIYTPQEISAKVLMKLKEDAEAFLGESVTDAVITVPAYFNDAQRKATKEAGTIAGLNVLRIINEPTSAALAYGLDKKDSEKIVVYDLGGGTFDVTVLETGDNVVEVLATGGNAFLGGDDFDNKLIDFLANEFKDETGIDLKNDVMALQRLKEAAENAKKELSSANETEINLPFITADASGPKHLVKKLTRAKFEGMIDSLVAETITKINEVVSDAGLKKDEIKEIVMVGGSTRVPLVQEEVKKAFNKDLNKSVNPDEVVAIGAAIQGAVIKGDVKDVLLLDVTPLSLGIETLGGVMTKIIEKGTTIPTKKEQVFSTAEDNQSAVTINVLQGEREFSRDNKSLGNFNLEGIPPAPRGMPQIEVTFDIDANGILTVSAKDKATGKAQEIKITGSSGLSEEEINNMVKDAELHKEEDKKRKEAVDARNAADSLAHQVEKSLSELGEKVAAADKENIQKALDDLRETLKNQNASKEEIESKMKALSEVSHKLAENMYKKDEPNTANDKKKKDDDVIDAEVE</sequence>
<feature type="chain" id="PRO_0000078438" description="Chaperone protein DnaK">
    <location>
        <begin position="1"/>
        <end position="623"/>
    </location>
</feature>
<feature type="region of interest" description="Disordered" evidence="2">
    <location>
        <begin position="595"/>
        <end position="623"/>
    </location>
</feature>
<feature type="compositionally biased region" description="Basic and acidic residues" evidence="2">
    <location>
        <begin position="595"/>
        <end position="615"/>
    </location>
</feature>
<feature type="modified residue" description="Phosphothreonine; by autocatalysis" evidence="1">
    <location>
        <position position="197"/>
    </location>
</feature>
<organism>
    <name type="scientific">Campylobacter jejuni subsp. jejuni serotype O:2 (strain ATCC 700819 / NCTC 11168)</name>
    <dbReference type="NCBI Taxonomy" id="192222"/>
    <lineage>
        <taxon>Bacteria</taxon>
        <taxon>Pseudomonadati</taxon>
        <taxon>Campylobacterota</taxon>
        <taxon>Epsilonproteobacteria</taxon>
        <taxon>Campylobacterales</taxon>
        <taxon>Campylobacteraceae</taxon>
        <taxon>Campylobacter</taxon>
    </lineage>
</organism>
<comment type="function">
    <text evidence="1">Acts as a chaperone.</text>
</comment>
<comment type="induction">
    <text evidence="1">By stress conditions e.g. heat shock (By similarity).</text>
</comment>
<comment type="similarity">
    <text evidence="3">Belongs to the heat shock protein 70 family.</text>
</comment>
<reference key="1">
    <citation type="journal article" date="1999" name="Infect. Immun.">
        <title>Cloning and expression of the dnaK gene of Campylobacter jejuni and antigenicity of heat shock protein 70.</title>
        <authorList>
            <person name="Thies F."/>
            <person name="Karch H."/>
            <person name="Hartung H.P."/>
            <person name="Giegerich G."/>
        </authorList>
    </citation>
    <scope>NUCLEOTIDE SEQUENCE [GENOMIC DNA]</scope>
</reference>
<reference key="2">
    <citation type="journal article" date="2000" name="Nature">
        <title>The genome sequence of the food-borne pathogen Campylobacter jejuni reveals hypervariable sequences.</title>
        <authorList>
            <person name="Parkhill J."/>
            <person name="Wren B.W."/>
            <person name="Mungall K.L."/>
            <person name="Ketley J.M."/>
            <person name="Churcher C.M."/>
            <person name="Basham D."/>
            <person name="Chillingworth T."/>
            <person name="Davies R.M."/>
            <person name="Feltwell T."/>
            <person name="Holroyd S."/>
            <person name="Jagels K."/>
            <person name="Karlyshev A.V."/>
            <person name="Moule S."/>
            <person name="Pallen M.J."/>
            <person name="Penn C.W."/>
            <person name="Quail M.A."/>
            <person name="Rajandream M.A."/>
            <person name="Rutherford K.M."/>
            <person name="van Vliet A.H.M."/>
            <person name="Whitehead S."/>
            <person name="Barrell B.G."/>
        </authorList>
    </citation>
    <scope>NUCLEOTIDE SEQUENCE [LARGE SCALE GENOMIC DNA]</scope>
    <source>
        <strain>ATCC 700819 / NCTC 11168</strain>
    </source>
</reference>
<keyword id="KW-0067">ATP-binding</keyword>
<keyword id="KW-0143">Chaperone</keyword>
<keyword id="KW-0547">Nucleotide-binding</keyword>
<keyword id="KW-0597">Phosphoprotein</keyword>
<keyword id="KW-1185">Reference proteome</keyword>
<keyword id="KW-0346">Stress response</keyword>